<keyword id="KW-1185">Reference proteome</keyword>
<keyword id="KW-0687">Ribonucleoprotein</keyword>
<keyword id="KW-0689">Ribosomal protein</keyword>
<accession>Q8A0Z5</accession>
<feature type="chain" id="PRO_1000128080" description="Small ribosomal subunit protein uS9">
    <location>
        <begin position="1"/>
        <end position="128"/>
    </location>
</feature>
<feature type="region of interest" description="Disordered" evidence="2">
    <location>
        <begin position="105"/>
        <end position="128"/>
    </location>
</feature>
<feature type="compositionally biased region" description="Basic residues" evidence="2">
    <location>
        <begin position="114"/>
        <end position="128"/>
    </location>
</feature>
<sequence length="128" mass="14380">MEVVNALGRRKRAIARVFVSEGTGKITINKRDLAEYFPSTILQYVVKQPLNKLGAAEKYDIKVNLCGGGFTGQSQALRLAIARALIKMNAEDKAALRAEGFMTRDPRSVERKKPGQPKARRRFQFSKR</sequence>
<evidence type="ECO:0000255" key="1">
    <source>
        <dbReference type="HAMAP-Rule" id="MF_00532"/>
    </source>
</evidence>
<evidence type="ECO:0000256" key="2">
    <source>
        <dbReference type="SAM" id="MobiDB-lite"/>
    </source>
</evidence>
<evidence type="ECO:0000305" key="3"/>
<proteinExistence type="inferred from homology"/>
<protein>
    <recommendedName>
        <fullName evidence="1">Small ribosomal subunit protein uS9</fullName>
    </recommendedName>
    <alternativeName>
        <fullName evidence="3">30S ribosomal protein S9</fullName>
    </alternativeName>
</protein>
<gene>
    <name evidence="1" type="primary">rpsI</name>
    <name type="ordered locus">BT_3876</name>
</gene>
<reference key="1">
    <citation type="journal article" date="2003" name="Science">
        <title>A genomic view of the human-Bacteroides thetaiotaomicron symbiosis.</title>
        <authorList>
            <person name="Xu J."/>
            <person name="Bjursell M.K."/>
            <person name="Himrod J."/>
            <person name="Deng S."/>
            <person name="Carmichael L.K."/>
            <person name="Chiang H.C."/>
            <person name="Hooper L.V."/>
            <person name="Gordon J.I."/>
        </authorList>
    </citation>
    <scope>NUCLEOTIDE SEQUENCE [LARGE SCALE GENOMIC DNA]</scope>
    <source>
        <strain>ATCC 29148 / DSM 2079 / JCM 5827 / CCUG 10774 / NCTC 10582 / VPI-5482 / E50</strain>
    </source>
</reference>
<dbReference type="EMBL" id="AE015928">
    <property type="protein sequence ID" value="AAO78981.1"/>
    <property type="molecule type" value="Genomic_DNA"/>
</dbReference>
<dbReference type="RefSeq" id="NP_812787.1">
    <property type="nucleotide sequence ID" value="NC_004663.1"/>
</dbReference>
<dbReference type="RefSeq" id="WP_011109004.1">
    <property type="nucleotide sequence ID" value="NC_004663.1"/>
</dbReference>
<dbReference type="SMR" id="Q8A0Z5"/>
<dbReference type="FunCoup" id="Q8A0Z5">
    <property type="interactions" value="662"/>
</dbReference>
<dbReference type="STRING" id="226186.BT_3876"/>
<dbReference type="PaxDb" id="226186-BT_3876"/>
<dbReference type="EnsemblBacteria" id="AAO78981">
    <property type="protein sequence ID" value="AAO78981"/>
    <property type="gene ID" value="BT_3876"/>
</dbReference>
<dbReference type="GeneID" id="60925051"/>
<dbReference type="KEGG" id="bth:BT_3876"/>
<dbReference type="PATRIC" id="fig|226186.12.peg.3940"/>
<dbReference type="eggNOG" id="COG0103">
    <property type="taxonomic scope" value="Bacteria"/>
</dbReference>
<dbReference type="HOGENOM" id="CLU_046483_2_1_10"/>
<dbReference type="InParanoid" id="Q8A0Z5"/>
<dbReference type="OrthoDB" id="9803965at2"/>
<dbReference type="Proteomes" id="UP000001414">
    <property type="component" value="Chromosome"/>
</dbReference>
<dbReference type="GO" id="GO:0022627">
    <property type="term" value="C:cytosolic small ribosomal subunit"/>
    <property type="evidence" value="ECO:0000318"/>
    <property type="project" value="GO_Central"/>
</dbReference>
<dbReference type="GO" id="GO:0003723">
    <property type="term" value="F:RNA binding"/>
    <property type="evidence" value="ECO:0000318"/>
    <property type="project" value="GO_Central"/>
</dbReference>
<dbReference type="GO" id="GO:0003735">
    <property type="term" value="F:structural constituent of ribosome"/>
    <property type="evidence" value="ECO:0000318"/>
    <property type="project" value="GO_Central"/>
</dbReference>
<dbReference type="GO" id="GO:0006412">
    <property type="term" value="P:translation"/>
    <property type="evidence" value="ECO:0007669"/>
    <property type="project" value="UniProtKB-UniRule"/>
</dbReference>
<dbReference type="FunFam" id="3.30.230.10:FF:000001">
    <property type="entry name" value="30S ribosomal protein S9"/>
    <property type="match status" value="1"/>
</dbReference>
<dbReference type="Gene3D" id="3.30.230.10">
    <property type="match status" value="1"/>
</dbReference>
<dbReference type="HAMAP" id="MF_00532_B">
    <property type="entry name" value="Ribosomal_uS9_B"/>
    <property type="match status" value="1"/>
</dbReference>
<dbReference type="InterPro" id="IPR020568">
    <property type="entry name" value="Ribosomal_Su5_D2-typ_SF"/>
</dbReference>
<dbReference type="InterPro" id="IPR000754">
    <property type="entry name" value="Ribosomal_uS9"/>
</dbReference>
<dbReference type="InterPro" id="IPR023035">
    <property type="entry name" value="Ribosomal_uS9_bac/plastid"/>
</dbReference>
<dbReference type="InterPro" id="IPR020574">
    <property type="entry name" value="Ribosomal_uS9_CS"/>
</dbReference>
<dbReference type="InterPro" id="IPR014721">
    <property type="entry name" value="Ribsml_uS5_D2-typ_fold_subgr"/>
</dbReference>
<dbReference type="NCBIfam" id="NF001099">
    <property type="entry name" value="PRK00132.1"/>
    <property type="match status" value="1"/>
</dbReference>
<dbReference type="PANTHER" id="PTHR21569">
    <property type="entry name" value="RIBOSOMAL PROTEIN S9"/>
    <property type="match status" value="1"/>
</dbReference>
<dbReference type="PANTHER" id="PTHR21569:SF1">
    <property type="entry name" value="SMALL RIBOSOMAL SUBUNIT PROTEIN US9M"/>
    <property type="match status" value="1"/>
</dbReference>
<dbReference type="Pfam" id="PF00380">
    <property type="entry name" value="Ribosomal_S9"/>
    <property type="match status" value="1"/>
</dbReference>
<dbReference type="SUPFAM" id="SSF54211">
    <property type="entry name" value="Ribosomal protein S5 domain 2-like"/>
    <property type="match status" value="1"/>
</dbReference>
<dbReference type="PROSITE" id="PS00360">
    <property type="entry name" value="RIBOSOMAL_S9"/>
    <property type="match status" value="1"/>
</dbReference>
<organism>
    <name type="scientific">Bacteroides thetaiotaomicron (strain ATCC 29148 / DSM 2079 / JCM 5827 / CCUG 10774 / NCTC 10582 / VPI-5482 / E50)</name>
    <dbReference type="NCBI Taxonomy" id="226186"/>
    <lineage>
        <taxon>Bacteria</taxon>
        <taxon>Pseudomonadati</taxon>
        <taxon>Bacteroidota</taxon>
        <taxon>Bacteroidia</taxon>
        <taxon>Bacteroidales</taxon>
        <taxon>Bacteroidaceae</taxon>
        <taxon>Bacteroides</taxon>
    </lineage>
</organism>
<name>RS9_BACTN</name>
<comment type="similarity">
    <text evidence="1">Belongs to the universal ribosomal protein uS9 family.</text>
</comment>